<gene>
    <name type="primary">rps17</name>
</gene>
<proteinExistence type="inferred from homology"/>
<organism>
    <name type="scientific">Cyanidium caldarium</name>
    <name type="common">Red alga</name>
    <dbReference type="NCBI Taxonomy" id="2771"/>
    <lineage>
        <taxon>Eukaryota</taxon>
        <taxon>Rhodophyta</taxon>
        <taxon>Bangiophyceae</taxon>
        <taxon>Cyanidiales</taxon>
        <taxon>Cyanidiaceae</taxon>
        <taxon>Cyanidium</taxon>
    </lineage>
</organism>
<protein>
    <recommendedName>
        <fullName evidence="2">Small ribosomal subunit protein uS17c</fullName>
    </recommendedName>
    <alternativeName>
        <fullName>30S ribosomal protein S17, chloroplastic</fullName>
    </alternativeName>
</protein>
<geneLocation type="chloroplast"/>
<sequence length="77" mass="8875">MSAKEIIGIVITKSLDKTAIVKTQSKSSHERYVKIIKKVKKYTVHDRENISRVGDKVIILQTRPLSKTKRWVIKSIL</sequence>
<reference key="1">
    <citation type="journal article" date="2000" name="J. Mol. Evol.">
        <title>The structure and gene repertoire of an ancient red algal plastid genome.</title>
        <authorList>
            <person name="Gloeckner G."/>
            <person name="Rosenthal A."/>
            <person name="Valentin K.-U."/>
        </authorList>
    </citation>
    <scope>NUCLEOTIDE SEQUENCE [LARGE SCALE GENOMIC DNA]</scope>
    <source>
        <strain>RK-1</strain>
    </source>
</reference>
<accession>Q9TLU1</accession>
<comment type="function">
    <text evidence="1">One of the primary rRNA binding proteins, it binds specifically to the 5'-end of 16S ribosomal RNA.</text>
</comment>
<comment type="subunit">
    <text evidence="1">Part of the 30S ribosomal subunit.</text>
</comment>
<comment type="subcellular location">
    <subcellularLocation>
        <location>Plastid</location>
        <location>Chloroplast</location>
    </subcellularLocation>
</comment>
<comment type="similarity">
    <text evidence="2">Belongs to the universal ribosomal protein uS17 family.</text>
</comment>
<feature type="chain" id="PRO_0000232621" description="Small ribosomal subunit protein uS17c">
    <location>
        <begin position="1"/>
        <end position="77"/>
    </location>
</feature>
<name>RR17_CYACA</name>
<evidence type="ECO:0000250" key="1"/>
<evidence type="ECO:0000305" key="2"/>
<dbReference type="EMBL" id="AF022186">
    <property type="protein sequence ID" value="AAF12916.1"/>
    <property type="molecule type" value="Genomic_DNA"/>
</dbReference>
<dbReference type="RefSeq" id="NP_045178.1">
    <property type="nucleotide sequence ID" value="NC_001840.1"/>
</dbReference>
<dbReference type="SMR" id="Q9TLU1"/>
<dbReference type="GeneID" id="800178"/>
<dbReference type="GO" id="GO:0009507">
    <property type="term" value="C:chloroplast"/>
    <property type="evidence" value="ECO:0007669"/>
    <property type="project" value="UniProtKB-SubCell"/>
</dbReference>
<dbReference type="GO" id="GO:0022627">
    <property type="term" value="C:cytosolic small ribosomal subunit"/>
    <property type="evidence" value="ECO:0007669"/>
    <property type="project" value="TreeGrafter"/>
</dbReference>
<dbReference type="GO" id="GO:0019843">
    <property type="term" value="F:rRNA binding"/>
    <property type="evidence" value="ECO:0007669"/>
    <property type="project" value="UniProtKB-UniRule"/>
</dbReference>
<dbReference type="GO" id="GO:0003735">
    <property type="term" value="F:structural constituent of ribosome"/>
    <property type="evidence" value="ECO:0007669"/>
    <property type="project" value="InterPro"/>
</dbReference>
<dbReference type="GO" id="GO:0006412">
    <property type="term" value="P:translation"/>
    <property type="evidence" value="ECO:0007669"/>
    <property type="project" value="UniProtKB-UniRule"/>
</dbReference>
<dbReference type="CDD" id="cd00364">
    <property type="entry name" value="Ribosomal_uS17"/>
    <property type="match status" value="1"/>
</dbReference>
<dbReference type="Gene3D" id="2.40.50.140">
    <property type="entry name" value="Nucleic acid-binding proteins"/>
    <property type="match status" value="1"/>
</dbReference>
<dbReference type="HAMAP" id="MF_01345_B">
    <property type="entry name" value="Ribosomal_uS17_B"/>
    <property type="match status" value="1"/>
</dbReference>
<dbReference type="InterPro" id="IPR012340">
    <property type="entry name" value="NA-bd_OB-fold"/>
</dbReference>
<dbReference type="InterPro" id="IPR000266">
    <property type="entry name" value="Ribosomal_uS17"/>
</dbReference>
<dbReference type="InterPro" id="IPR019984">
    <property type="entry name" value="Ribosomal_uS17_bact/chlr"/>
</dbReference>
<dbReference type="InterPro" id="IPR019979">
    <property type="entry name" value="Ribosomal_uS17_CS"/>
</dbReference>
<dbReference type="NCBIfam" id="NF004123">
    <property type="entry name" value="PRK05610.1"/>
    <property type="match status" value="1"/>
</dbReference>
<dbReference type="PANTHER" id="PTHR10744">
    <property type="entry name" value="40S RIBOSOMAL PROTEIN S11 FAMILY MEMBER"/>
    <property type="match status" value="1"/>
</dbReference>
<dbReference type="PANTHER" id="PTHR10744:SF1">
    <property type="entry name" value="SMALL RIBOSOMAL SUBUNIT PROTEIN US17M"/>
    <property type="match status" value="1"/>
</dbReference>
<dbReference type="Pfam" id="PF00366">
    <property type="entry name" value="Ribosomal_S17"/>
    <property type="match status" value="1"/>
</dbReference>
<dbReference type="PRINTS" id="PR00973">
    <property type="entry name" value="RIBOSOMALS17"/>
</dbReference>
<dbReference type="SUPFAM" id="SSF50249">
    <property type="entry name" value="Nucleic acid-binding proteins"/>
    <property type="match status" value="1"/>
</dbReference>
<dbReference type="PROSITE" id="PS00056">
    <property type="entry name" value="RIBOSOMAL_S17"/>
    <property type="match status" value="1"/>
</dbReference>
<keyword id="KW-0150">Chloroplast</keyword>
<keyword id="KW-0934">Plastid</keyword>
<keyword id="KW-0687">Ribonucleoprotein</keyword>
<keyword id="KW-0689">Ribosomal protein</keyword>
<keyword id="KW-0694">RNA-binding</keyword>
<keyword id="KW-0699">rRNA-binding</keyword>